<organism>
    <name type="scientific">Sendai virus (strain Hamamatsu)</name>
    <name type="common">SeV</name>
    <dbReference type="NCBI Taxonomy" id="302271"/>
    <lineage>
        <taxon>Viruses</taxon>
        <taxon>Riboviria</taxon>
        <taxon>Orthornavirae</taxon>
        <taxon>Negarnaviricota</taxon>
        <taxon>Haploviricotina</taxon>
        <taxon>Monjiviricetes</taxon>
        <taxon>Mononegavirales</taxon>
        <taxon>Paramyxoviridae</taxon>
        <taxon>Feraresvirinae</taxon>
        <taxon>Respirovirus</taxon>
        <taxon>Respirovirus muris</taxon>
    </lineage>
</organism>
<comment type="function">
    <text evidence="2 3">Forms the helical nucleocapsid (NC) in a ratio of 1 N per 6 ribonucleotides, protecting the genome from nucleases (By similarity). The encapsidated genomic RNA serves as template for transcription and replication; encapsidation by N is coupled to RNA synthesis. Forms the encapsidation complex with the phosphoprotein protein P. Before encapsidation, the newly synthesized free N protein, so-called N0, is chaperoned by P (By similarity).</text>
</comment>
<comment type="subunit">
    <text evidence="1 2 3">Homomultimer; forms the nucleocapsid (By similarity). Binds to the viral genomic RNA (By similarity). N0 interacts with the phosphoprotein (via N-terminus); this interaction allows P to chaperon N0 to avoid N polymerization before encapsidation (By similarity). Interacts as N-RNA template with the phosphoprotein (via C-terminus); this interaction positions the polymerase on the template (By similarity).</text>
</comment>
<comment type="subcellular location">
    <subcellularLocation>
        <location evidence="5">Virion</location>
    </subcellularLocation>
    <subcellularLocation>
        <location>Host cytoplasm</location>
    </subcellularLocation>
</comment>
<comment type="domain">
    <text evidence="2">Ncore is globular and carries regions required for self-assembly and RNA-binding. Ntail is an intrinsically disordered monomeric domain in the C-terminus.</text>
</comment>
<comment type="miscellaneous">
    <text evidence="5">Most abundant protein in the virion. Since the viral RNA genome consists of 15,383 bases,there are 2564 molecules per encapsidated genome.</text>
</comment>
<comment type="similarity">
    <text evidence="5">Belongs to the paramyxoviruses nucleocapsid family.</text>
</comment>
<evidence type="ECO:0000250" key="1">
    <source>
        <dbReference type="UniProtKB" id="O57286"/>
    </source>
</evidence>
<evidence type="ECO:0000250" key="2">
    <source>
        <dbReference type="UniProtKB" id="P06159"/>
    </source>
</evidence>
<evidence type="ECO:0000250" key="3">
    <source>
        <dbReference type="UniProtKB" id="Q07097"/>
    </source>
</evidence>
<evidence type="ECO:0000256" key="4">
    <source>
        <dbReference type="SAM" id="MobiDB-lite"/>
    </source>
</evidence>
<evidence type="ECO:0000305" key="5"/>
<dbReference type="EMBL" id="AB039658">
    <property type="protein sequence ID" value="BAB20019.1"/>
    <property type="molecule type" value="Genomic_RNA"/>
</dbReference>
<dbReference type="EMBL" id="AB065186">
    <property type="protein sequence ID" value="BAC79125.1"/>
    <property type="molecule type" value="Genomic_RNA"/>
</dbReference>
<dbReference type="EMBL" id="AB065187">
    <property type="protein sequence ID" value="BAC07505.1"/>
    <property type="molecule type" value="Genomic_RNA"/>
</dbReference>
<dbReference type="EMBL" id="AB065188">
    <property type="protein sequence ID" value="BAC79133.1"/>
    <property type="molecule type" value="Genomic_RNA"/>
</dbReference>
<dbReference type="EMBL" id="AB065189">
    <property type="protein sequence ID" value="BAC79141.1"/>
    <property type="molecule type" value="Genomic_RNA"/>
</dbReference>
<dbReference type="SMR" id="Q9DUE3"/>
<dbReference type="Proteomes" id="UP000007191">
    <property type="component" value="Genome"/>
</dbReference>
<dbReference type="Proteomes" id="UP000008510">
    <property type="component" value="Genome"/>
</dbReference>
<dbReference type="Proteomes" id="UP000008857">
    <property type="component" value="Genome"/>
</dbReference>
<dbReference type="Proteomes" id="UP000180650">
    <property type="component" value="Genome"/>
</dbReference>
<dbReference type="Proteomes" id="UP000180718">
    <property type="component" value="Genome"/>
</dbReference>
<dbReference type="GO" id="GO:0019029">
    <property type="term" value="C:helical viral capsid"/>
    <property type="evidence" value="ECO:0007669"/>
    <property type="project" value="UniProtKB-KW"/>
</dbReference>
<dbReference type="GO" id="GO:0030430">
    <property type="term" value="C:host cell cytoplasm"/>
    <property type="evidence" value="ECO:0007669"/>
    <property type="project" value="UniProtKB-SubCell"/>
</dbReference>
<dbReference type="GO" id="GO:1990904">
    <property type="term" value="C:ribonucleoprotein complex"/>
    <property type="evidence" value="ECO:0007669"/>
    <property type="project" value="UniProtKB-KW"/>
</dbReference>
<dbReference type="GO" id="GO:0019013">
    <property type="term" value="C:viral nucleocapsid"/>
    <property type="evidence" value="ECO:0007669"/>
    <property type="project" value="UniProtKB-KW"/>
</dbReference>
<dbReference type="GO" id="GO:0003723">
    <property type="term" value="F:RNA binding"/>
    <property type="evidence" value="ECO:0007669"/>
    <property type="project" value="UniProtKB-KW"/>
</dbReference>
<dbReference type="GO" id="GO:0005198">
    <property type="term" value="F:structural molecule activity"/>
    <property type="evidence" value="ECO:0007669"/>
    <property type="project" value="InterPro"/>
</dbReference>
<dbReference type="InterPro" id="IPR002021">
    <property type="entry name" value="Paramyx_ncap"/>
</dbReference>
<dbReference type="Pfam" id="PF00973">
    <property type="entry name" value="Paramyxo_ncap"/>
    <property type="match status" value="1"/>
</dbReference>
<reference key="1">
    <citation type="journal article" date="2001" name="Virus Genes">
        <title>Conserved and non-conserved regions in the Sendai virus genome: evolution of a gene possessing overlapping reading frames.</title>
        <authorList>
            <person name="Fujii Y."/>
            <person name="Kiyotani K."/>
            <person name="Yoshida T."/>
            <person name="Sakaguchi T."/>
        </authorList>
    </citation>
    <scope>NUCLEOTIDE SEQUENCE [GENOMIC RNA]</scope>
</reference>
<reference key="2">
    <citation type="journal article" date="2002" name="J. Virol.">
        <title>Involvement of the leader sequence in Sendai virus pathogenesis revealed by recovery of a pathogenic field isolate from cDNA.</title>
        <authorList>
            <person name="Fujii Y."/>
            <person name="Sakaguchi T."/>
            <person name="Kiyotani K."/>
            <person name="Huang C."/>
            <person name="Fukuhara N."/>
            <person name="Egi Y."/>
            <person name="Yoshida T."/>
        </authorList>
    </citation>
    <scope>NUCLEOTIDE SEQUENCE [GENOMIC RNA]</scope>
</reference>
<reference key="3">
    <citation type="journal article" date="2002" name="Virus Genes">
        <title>Identification of mutations associated with attenuation of virulence of a field Sendai virus isolate by egg passage.</title>
        <authorList>
            <person name="Fujii Y."/>
            <person name="Sakaguchi T."/>
            <person name="Kiyotani K."/>
            <person name="Huang C."/>
            <person name="Fukuhara N."/>
            <person name="Yoshida T."/>
        </authorList>
    </citation>
    <scope>NUCLEOTIDE SEQUENCE [GENOMIC RNA]</scope>
    <source>
        <strain>Isolate E15cl2</strain>
        <strain>Isolate E30cl2</strain>
        <strain>Isolate E30M15cl5</strain>
    </source>
</reference>
<reference key="4">
    <citation type="submission" date="2001-07" db="EMBL/GenBank/DDBJ databases">
        <authorList>
            <person name="Fujii Y."/>
            <person name="Kiyotani K."/>
            <person name="Huang C."/>
            <person name="Fukuhara N."/>
            <person name="Egi K."/>
            <person name="Yoshida T."/>
            <person name="Sakaguchi T."/>
        </authorList>
    </citation>
    <scope>NUCLEOTIDE SEQUENCE [GENOMIC RNA]</scope>
    <source>
        <strain>Isolate E50cl9</strain>
    </source>
</reference>
<sequence>MAGLLSTFDTFSSRRSESINKSGGGAVIPGQRSTVSVFVLGPSVTDDADKLFIATTFLAHSLDTDKQHSQRGGFLVSLLAMAYSSPELYLTTNGVNADVKYVIYNIEKDPKRTKTDGFIVKTRDMEYERTTEWLFGPMVNKSPLFQGQRDAADPDTLLQIYGYPACLGAIIVQVWIVLVKAITSSAGLRKGFFNRLEAFRQDGTVKGALVFTGETVEGIGSVMRSQQSLVSLMVETLVTMNTARSDLTTLEKNIQIVGNYIRDAGLASFMNTIKYGVETKMAALTLSNLRPDINKLRSLIDTYLSKGPRAPFICILKDPVHGEFAPGNYPALWSYAMGVAVVQNKAMQQYVTGRTYLDMEMFLLGQAVAKDAESKISSALEDELGVTDTAKERLRHHLANLSGGDGAYHKPTGGGAIEVALDNADIDLEPEAHTDQDARGWGGDSGDRWARSTSSGHFITLHGAERLEEETNDEDVSDIERRIARRLAERRQEDATTHEDEGRNNGVDHDEEDDAAAAAGMGGI</sequence>
<keyword id="KW-0167">Capsid protein</keyword>
<keyword id="KW-1139">Helical capsid protein</keyword>
<keyword id="KW-1035">Host cytoplasm</keyword>
<keyword id="KW-0687">Ribonucleoprotein</keyword>
<keyword id="KW-0694">RNA-binding</keyword>
<keyword id="KW-0543">Viral nucleoprotein</keyword>
<keyword id="KW-0946">Virion</keyword>
<accession>Q9DUE3</accession>
<protein>
    <recommendedName>
        <fullName>Nucleoprotein</fullName>
    </recommendedName>
    <alternativeName>
        <fullName>Nucleocapsid protein</fullName>
        <shortName>NP</shortName>
        <shortName>Protein N</shortName>
    </alternativeName>
</protein>
<organismHost>
    <name type="scientific">Cavia cutleri</name>
    <name type="common">Guinea pig</name>
    <dbReference type="NCBI Taxonomy" id="10144"/>
</organismHost>
<organismHost>
    <name type="scientific">Cricetidae sp.</name>
    <name type="common">Hamster</name>
    <dbReference type="NCBI Taxonomy" id="36483"/>
</organismHost>
<organismHost>
    <name type="scientific">Mus musculus</name>
    <name type="common">Mouse</name>
    <dbReference type="NCBI Taxonomy" id="10090"/>
</organismHost>
<organismHost>
    <name type="scientific">Rattus norvegicus</name>
    <name type="common">Rat</name>
    <dbReference type="NCBI Taxonomy" id="10116"/>
</organismHost>
<proteinExistence type="inferred from homology"/>
<feature type="chain" id="PRO_0000142679" description="Nucleoprotein">
    <location>
        <begin position="1"/>
        <end position="524"/>
    </location>
</feature>
<feature type="region of interest" description="Ncore" evidence="2">
    <location>
        <begin position="1"/>
        <end position="404"/>
    </location>
</feature>
<feature type="region of interest" description="Ntail" evidence="2">
    <location>
        <begin position="405"/>
        <end position="522"/>
    </location>
</feature>
<feature type="region of interest" description="Homomultimerization" evidence="3">
    <location>
        <begin position="440"/>
        <end position="461"/>
    </location>
</feature>
<feature type="region of interest" description="Interaction with the phosphoprotein" evidence="3">
    <location>
        <begin position="462"/>
        <end position="471"/>
    </location>
</feature>
<feature type="region of interest" description="Disordered" evidence="4">
    <location>
        <begin position="487"/>
        <end position="524"/>
    </location>
</feature>
<feature type="compositionally biased region" description="Basic and acidic residues" evidence="4">
    <location>
        <begin position="487"/>
        <end position="508"/>
    </location>
</feature>
<feature type="binding site" evidence="1">
    <location>
        <position position="180"/>
    </location>
    <ligand>
        <name>RNA</name>
        <dbReference type="ChEBI" id="CHEBI:33697"/>
    </ligand>
</feature>
<feature type="binding site" evidence="1">
    <location>
        <position position="190"/>
    </location>
    <ligand>
        <name>RNA</name>
        <dbReference type="ChEBI" id="CHEBI:33697"/>
    </ligand>
</feature>
<feature type="binding site" evidence="1">
    <location>
        <position position="195"/>
    </location>
    <ligand>
        <name>RNA</name>
        <dbReference type="ChEBI" id="CHEBI:33697"/>
    </ligand>
</feature>
<feature type="binding site" evidence="1">
    <location>
        <position position="260"/>
    </location>
    <ligand>
        <name>RNA</name>
        <dbReference type="ChEBI" id="CHEBI:33697"/>
    </ligand>
</feature>
<feature type="binding site" evidence="1">
    <location>
        <position position="350"/>
    </location>
    <ligand>
        <name>RNA</name>
        <dbReference type="ChEBI" id="CHEBI:33697"/>
    </ligand>
</feature>
<feature type="binding site" evidence="1">
    <location>
        <position position="354"/>
    </location>
    <ligand>
        <name>RNA</name>
        <dbReference type="ChEBI" id="CHEBI:33697"/>
    </ligand>
</feature>
<gene>
    <name type="primary">N</name>
    <name type="synonym">NP</name>
</gene>
<name>NCAP_SENDA</name>